<keyword id="KW-0963">Cytoplasm</keyword>
<keyword id="KW-0210">Decarboxylase</keyword>
<keyword id="KW-0456">Lyase</keyword>
<keyword id="KW-0627">Porphyrin biosynthesis</keyword>
<keyword id="KW-1185">Reference proteome</keyword>
<organism>
    <name type="scientific">Anaeromyxobacter dehalogenans (strain 2CP-C)</name>
    <dbReference type="NCBI Taxonomy" id="290397"/>
    <lineage>
        <taxon>Bacteria</taxon>
        <taxon>Pseudomonadati</taxon>
        <taxon>Myxococcota</taxon>
        <taxon>Myxococcia</taxon>
        <taxon>Myxococcales</taxon>
        <taxon>Cystobacterineae</taxon>
        <taxon>Anaeromyxobacteraceae</taxon>
        <taxon>Anaeromyxobacter</taxon>
    </lineage>
</organism>
<gene>
    <name evidence="1" type="primary">hemE</name>
    <name type="ordered locus">Adeh_1088</name>
</gene>
<proteinExistence type="inferred from homology"/>
<sequence length="346" mass="37690">MTHRFLAACRREPVDRVPVWMMRQAGRYQPSYRAVRQKVSFLELCRSPELIAQVTVAPIDEFGFDAAILFSDILVHLPAMGLDLTFEKGEKGKGDGGPKIGNPVRTRADVDALRVPVPKKDLPYVLDGVRAIRTALADRVPLIGFVGGPFTVASYAVEGGSQGFTRLKTMLYAEPATAHALFEKLTQAAIVQIEEQVAAGAQAAQIFESWLGELAREDLEEFSFPYLARIAEAVRKTGVPSIIFSTGTTAHLERMAKLGYDVVSVDWRIPIDEARARLPGVAVQGNYDSTLLLGPREVAVARAQQLLRAAGPTPGYIFNLGHGIQVGTPTENVKAVVDAVHAFGWK</sequence>
<name>DCUP_ANADE</name>
<evidence type="ECO:0000255" key="1">
    <source>
        <dbReference type="HAMAP-Rule" id="MF_00218"/>
    </source>
</evidence>
<evidence type="ECO:0000305" key="2"/>
<protein>
    <recommendedName>
        <fullName evidence="1">Uroporphyrinogen decarboxylase</fullName>
        <shortName evidence="1">UPD</shortName>
        <shortName evidence="1">URO-D</shortName>
        <ecNumber evidence="1">4.1.1.37</ecNumber>
    </recommendedName>
</protein>
<reference key="1">
    <citation type="submission" date="2006-01" db="EMBL/GenBank/DDBJ databases">
        <title>Complete sequence of Anaeromyxobacter dehalogenans 2CP-C.</title>
        <authorList>
            <person name="Copeland A."/>
            <person name="Lucas S."/>
            <person name="Lapidus A."/>
            <person name="Barry K."/>
            <person name="Detter J.C."/>
            <person name="Glavina T."/>
            <person name="Hammon N."/>
            <person name="Israni S."/>
            <person name="Pitluck S."/>
            <person name="Brettin T."/>
            <person name="Bruce D."/>
            <person name="Han C."/>
            <person name="Tapia R."/>
            <person name="Gilna P."/>
            <person name="Kiss H."/>
            <person name="Schmutz J."/>
            <person name="Larimer F."/>
            <person name="Land M."/>
            <person name="Kyrpides N."/>
            <person name="Anderson I."/>
            <person name="Sanford R.A."/>
            <person name="Ritalahti K.M."/>
            <person name="Thomas H.S."/>
            <person name="Kirby J.R."/>
            <person name="Zhulin I.B."/>
            <person name="Loeffler F.E."/>
            <person name="Richardson P."/>
        </authorList>
    </citation>
    <scope>NUCLEOTIDE SEQUENCE [LARGE SCALE GENOMIC DNA]</scope>
    <source>
        <strain>2CP-C</strain>
    </source>
</reference>
<feature type="chain" id="PRO_0000325621" description="Uroporphyrinogen decarboxylase">
    <location>
        <begin position="1"/>
        <end position="346"/>
    </location>
</feature>
<feature type="binding site" evidence="1">
    <location>
        <begin position="23"/>
        <end position="27"/>
    </location>
    <ligand>
        <name>substrate</name>
    </ligand>
</feature>
<feature type="binding site" evidence="1">
    <location>
        <position position="72"/>
    </location>
    <ligand>
        <name>substrate</name>
    </ligand>
</feature>
<feature type="binding site" evidence="1">
    <location>
        <position position="155"/>
    </location>
    <ligand>
        <name>substrate</name>
    </ligand>
</feature>
<feature type="binding site" evidence="1">
    <location>
        <position position="209"/>
    </location>
    <ligand>
        <name>substrate</name>
    </ligand>
</feature>
<feature type="binding site" evidence="1">
    <location>
        <position position="322"/>
    </location>
    <ligand>
        <name>substrate</name>
    </ligand>
</feature>
<feature type="site" description="Transition state stabilizer" evidence="1">
    <location>
        <position position="72"/>
    </location>
</feature>
<dbReference type="EC" id="4.1.1.37" evidence="1"/>
<dbReference type="EMBL" id="CP000251">
    <property type="protein sequence ID" value="ABC80863.1"/>
    <property type="status" value="ALT_INIT"/>
    <property type="molecule type" value="Genomic_DNA"/>
</dbReference>
<dbReference type="RefSeq" id="WP_011420146.1">
    <property type="nucleotide sequence ID" value="NC_007760.1"/>
</dbReference>
<dbReference type="SMR" id="Q2IPY2"/>
<dbReference type="STRING" id="290397.Adeh_1088"/>
<dbReference type="KEGG" id="ade:Adeh_1088"/>
<dbReference type="eggNOG" id="COG0407">
    <property type="taxonomic scope" value="Bacteria"/>
</dbReference>
<dbReference type="HOGENOM" id="CLU_040933_0_0_7"/>
<dbReference type="OrthoDB" id="9806656at2"/>
<dbReference type="UniPathway" id="UPA00251">
    <property type="reaction ID" value="UER00321"/>
</dbReference>
<dbReference type="Proteomes" id="UP000001935">
    <property type="component" value="Chromosome"/>
</dbReference>
<dbReference type="GO" id="GO:0005829">
    <property type="term" value="C:cytosol"/>
    <property type="evidence" value="ECO:0007669"/>
    <property type="project" value="TreeGrafter"/>
</dbReference>
<dbReference type="GO" id="GO:0004853">
    <property type="term" value="F:uroporphyrinogen decarboxylase activity"/>
    <property type="evidence" value="ECO:0007669"/>
    <property type="project" value="UniProtKB-UniRule"/>
</dbReference>
<dbReference type="GO" id="GO:0006782">
    <property type="term" value="P:protoporphyrinogen IX biosynthetic process"/>
    <property type="evidence" value="ECO:0007669"/>
    <property type="project" value="UniProtKB-UniRule"/>
</dbReference>
<dbReference type="CDD" id="cd00717">
    <property type="entry name" value="URO-D"/>
    <property type="match status" value="1"/>
</dbReference>
<dbReference type="FunFam" id="3.20.20.210:FF:000008">
    <property type="entry name" value="Uroporphyrinogen decarboxylase"/>
    <property type="match status" value="1"/>
</dbReference>
<dbReference type="Gene3D" id="3.20.20.210">
    <property type="match status" value="1"/>
</dbReference>
<dbReference type="HAMAP" id="MF_00218">
    <property type="entry name" value="URO_D"/>
    <property type="match status" value="1"/>
</dbReference>
<dbReference type="InterPro" id="IPR038071">
    <property type="entry name" value="UROD/MetE-like_sf"/>
</dbReference>
<dbReference type="InterPro" id="IPR006361">
    <property type="entry name" value="Uroporphyrinogen_deCO2ase_HemE"/>
</dbReference>
<dbReference type="InterPro" id="IPR000257">
    <property type="entry name" value="Uroporphyrinogen_deCOase"/>
</dbReference>
<dbReference type="NCBIfam" id="TIGR01464">
    <property type="entry name" value="hemE"/>
    <property type="match status" value="1"/>
</dbReference>
<dbReference type="PANTHER" id="PTHR21091">
    <property type="entry name" value="METHYLTETRAHYDROFOLATE:HOMOCYSTEINE METHYLTRANSFERASE RELATED"/>
    <property type="match status" value="1"/>
</dbReference>
<dbReference type="PANTHER" id="PTHR21091:SF169">
    <property type="entry name" value="UROPORPHYRINOGEN DECARBOXYLASE"/>
    <property type="match status" value="1"/>
</dbReference>
<dbReference type="Pfam" id="PF01208">
    <property type="entry name" value="URO-D"/>
    <property type="match status" value="1"/>
</dbReference>
<dbReference type="SUPFAM" id="SSF51726">
    <property type="entry name" value="UROD/MetE-like"/>
    <property type="match status" value="1"/>
</dbReference>
<dbReference type="PROSITE" id="PS00906">
    <property type="entry name" value="UROD_1"/>
    <property type="match status" value="1"/>
</dbReference>
<dbReference type="PROSITE" id="PS00907">
    <property type="entry name" value="UROD_2"/>
    <property type="match status" value="1"/>
</dbReference>
<accession>Q2IPY2</accession>
<comment type="function">
    <text evidence="1">Catalyzes the decarboxylation of four acetate groups of uroporphyrinogen-III to yield coproporphyrinogen-III.</text>
</comment>
<comment type="catalytic activity">
    <reaction evidence="1">
        <text>uroporphyrinogen III + 4 H(+) = coproporphyrinogen III + 4 CO2</text>
        <dbReference type="Rhea" id="RHEA:19865"/>
        <dbReference type="ChEBI" id="CHEBI:15378"/>
        <dbReference type="ChEBI" id="CHEBI:16526"/>
        <dbReference type="ChEBI" id="CHEBI:57308"/>
        <dbReference type="ChEBI" id="CHEBI:57309"/>
        <dbReference type="EC" id="4.1.1.37"/>
    </reaction>
</comment>
<comment type="pathway">
    <text evidence="1">Porphyrin-containing compound metabolism; protoporphyrin-IX biosynthesis; coproporphyrinogen-III from 5-aminolevulinate: step 4/4.</text>
</comment>
<comment type="subunit">
    <text evidence="1">Homodimer.</text>
</comment>
<comment type="subcellular location">
    <subcellularLocation>
        <location evidence="1">Cytoplasm</location>
    </subcellularLocation>
</comment>
<comment type="similarity">
    <text evidence="1">Belongs to the uroporphyrinogen decarboxylase family.</text>
</comment>
<comment type="sequence caution" evidence="2">
    <conflict type="erroneous initiation">
        <sequence resource="EMBL-CDS" id="ABC80863"/>
    </conflict>
</comment>